<proteinExistence type="evidence at protein level"/>
<name>RIDA_MOUSE</name>
<sequence>MSSIIRKVISTTKAPAAIGPYSQAVQVDRTIYISGQVGLDPSSGQLVPGGVVEEAKQALKNLGEILKAAGCDFNNVVKTTVLLADMNDFGTVNEIYKTYFQGSLPARAAYQVAALPRGSRVEIEAIAVQGPFIKA</sequence>
<gene>
    <name evidence="7" type="primary">Rida</name>
    <name evidence="5" type="synonym">Hrp12</name>
</gene>
<feature type="initiator methionine" description="Removed" evidence="3">
    <location>
        <position position="1"/>
    </location>
</feature>
<feature type="chain" id="PRO_0000170309" description="2-iminobutanoate/2-iminopropanoate deaminase">
    <location>
        <begin position="2"/>
        <end position="135"/>
    </location>
</feature>
<feature type="modified residue" description="N-acetylserine" evidence="3">
    <location>
        <position position="2"/>
    </location>
</feature>
<feature type="modified residue" description="N6-succinyllysine" evidence="8">
    <location>
        <position position="13"/>
    </location>
</feature>
<feature type="modified residue" description="N6-succinyllysine" evidence="8">
    <location>
        <position position="60"/>
    </location>
</feature>
<feature type="modified residue" description="N6-succinyllysine" evidence="8">
    <location>
        <position position="67"/>
    </location>
</feature>
<feature type="modified residue" description="N6-succinyllysine" evidence="8">
    <location>
        <position position="134"/>
    </location>
</feature>
<organism>
    <name type="scientific">Mus musculus</name>
    <name type="common">Mouse</name>
    <dbReference type="NCBI Taxonomy" id="10090"/>
    <lineage>
        <taxon>Eukaryota</taxon>
        <taxon>Metazoa</taxon>
        <taxon>Chordata</taxon>
        <taxon>Craniata</taxon>
        <taxon>Vertebrata</taxon>
        <taxon>Euteleostomi</taxon>
        <taxon>Mammalia</taxon>
        <taxon>Eutheria</taxon>
        <taxon>Euarchontoglires</taxon>
        <taxon>Glires</taxon>
        <taxon>Rodentia</taxon>
        <taxon>Myomorpha</taxon>
        <taxon>Muroidea</taxon>
        <taxon>Muridae</taxon>
        <taxon>Murinae</taxon>
        <taxon>Mus</taxon>
        <taxon>Mus</taxon>
    </lineage>
</organism>
<comment type="function">
    <text evidence="1">Catalyzes the hydrolytic deamination of enamine/imine intermediates that form during the course of normal metabolism. May facilitate the release of ammonia from these potentially toxic reactive metabolites, reducing their impact on cellular components. It may act on enamine/imine intermediates formed by several types of pyridoxal-5'-phosphate-dependent dehydratases including L-threonine dehydratase.</text>
</comment>
<comment type="function">
    <text evidence="1">Also promotes endoribonucleolytic cleavage of some transcripts by promoting recruitment of the ribonuclease P/MRP complex. Acts by bridging YTHDF2 and the ribonuclease P/MRP complex. RIDA/HRSP12 binds to N6-methyladenosine (m6A)-containing mRNAs containing a 5'-GGUUC-3' motif: cooperative binding of RIDA/HRSP12 and YTHDF2 to such transcripts lead to recruitment of the ribonuclease P/MRP complex and subsequent endoribonucleolytic cleavage.</text>
</comment>
<comment type="catalytic activity">
    <reaction evidence="1">
        <text>2-iminobutanoate + H2O = 2-oxobutanoate + NH4(+)</text>
        <dbReference type="Rhea" id="RHEA:39975"/>
        <dbReference type="ChEBI" id="CHEBI:15377"/>
        <dbReference type="ChEBI" id="CHEBI:16763"/>
        <dbReference type="ChEBI" id="CHEBI:28938"/>
        <dbReference type="ChEBI" id="CHEBI:76545"/>
        <dbReference type="EC" id="3.5.99.10"/>
    </reaction>
</comment>
<comment type="catalytic activity">
    <reaction evidence="1">
        <text>2-iminopropanoate + H2O = pyruvate + NH4(+)</text>
        <dbReference type="Rhea" id="RHEA:40671"/>
        <dbReference type="ChEBI" id="CHEBI:15361"/>
        <dbReference type="ChEBI" id="CHEBI:15377"/>
        <dbReference type="ChEBI" id="CHEBI:28938"/>
        <dbReference type="ChEBI" id="CHEBI:44400"/>
        <dbReference type="EC" id="3.5.99.10"/>
    </reaction>
</comment>
<comment type="subunit">
    <text evidence="1">Homotrimer. Interacts with YTHDF2.</text>
</comment>
<comment type="subcellular location">
    <subcellularLocation>
        <location evidence="1">Cytoplasm</location>
    </subcellularLocation>
    <subcellularLocation>
        <location evidence="1">Nucleus</location>
    </subcellularLocation>
    <subcellularLocation>
        <location evidence="2">Peroxisome</location>
    </subcellularLocation>
    <subcellularLocation>
        <location evidence="2">Mitochondrion</location>
    </subcellularLocation>
    <text evidence="1">Mostly cytoplasmic but, in less differentiated cells occasionally nuclear.</text>
</comment>
<comment type="tissue specificity">
    <text evidence="4">Expressed predominantly in liver and kidney. Lower levels in lung and brain.</text>
</comment>
<comment type="similarity">
    <text evidence="6">Belongs to the RutC family.</text>
</comment>
<comment type="sequence caution" evidence="6">
    <conflict type="erroneous initiation">
        <sequence resource="EMBL-CDS" id="AAA96033"/>
    </conflict>
    <text>Extended N-terminus.</text>
</comment>
<dbReference type="EC" id="3.5.99.10" evidence="1"/>
<dbReference type="EMBL" id="U50631">
    <property type="protein sequence ID" value="AAA96033.1"/>
    <property type="status" value="ALT_INIT"/>
    <property type="molecule type" value="mRNA"/>
</dbReference>
<dbReference type="EMBL" id="BC092375">
    <property type="protein sequence ID" value="AAH92375.1"/>
    <property type="molecule type" value="mRNA"/>
</dbReference>
<dbReference type="EMBL" id="BC125590">
    <property type="protein sequence ID" value="AAI25591.1"/>
    <property type="molecule type" value="mRNA"/>
</dbReference>
<dbReference type="EMBL" id="BC125592">
    <property type="protein sequence ID" value="AAI25593.1"/>
    <property type="molecule type" value="mRNA"/>
</dbReference>
<dbReference type="CCDS" id="CCDS27418.1"/>
<dbReference type="RefSeq" id="NP_032313.2">
    <property type="nucleotide sequence ID" value="NM_008287.3"/>
</dbReference>
<dbReference type="SMR" id="P52760"/>
<dbReference type="BioGRID" id="200424">
    <property type="interactions" value="1"/>
</dbReference>
<dbReference type="FunCoup" id="P52760">
    <property type="interactions" value="2170"/>
</dbReference>
<dbReference type="IntAct" id="P52760">
    <property type="interactions" value="2"/>
</dbReference>
<dbReference type="MINT" id="P52760"/>
<dbReference type="STRING" id="10090.ENSMUSP00000022946"/>
<dbReference type="GlyGen" id="P52760">
    <property type="glycosylation" value="1 site, 1 O-linked glycan (1 site)"/>
</dbReference>
<dbReference type="iPTMnet" id="P52760"/>
<dbReference type="PhosphoSitePlus" id="P52760"/>
<dbReference type="SwissPalm" id="P52760"/>
<dbReference type="CPTAC" id="non-CPTAC-3491"/>
<dbReference type="jPOST" id="P52760"/>
<dbReference type="PaxDb" id="10090-ENSMUSP00000022946"/>
<dbReference type="PeptideAtlas" id="P52760"/>
<dbReference type="ProteomicsDB" id="253241"/>
<dbReference type="Pumba" id="P52760"/>
<dbReference type="TopDownProteomics" id="P52760"/>
<dbReference type="Antibodypedia" id="13021">
    <property type="antibodies" value="152 antibodies from 24 providers"/>
</dbReference>
<dbReference type="DNASU" id="15473"/>
<dbReference type="Ensembl" id="ENSMUST00000022946.6">
    <property type="protein sequence ID" value="ENSMUSP00000022946.6"/>
    <property type="gene ID" value="ENSMUSG00000022323.12"/>
</dbReference>
<dbReference type="GeneID" id="15473"/>
<dbReference type="KEGG" id="mmu:15473"/>
<dbReference type="UCSC" id="uc007vlt.2">
    <property type="organism name" value="mouse"/>
</dbReference>
<dbReference type="AGR" id="MGI:1095401"/>
<dbReference type="CTD" id="10247"/>
<dbReference type="MGI" id="MGI:1095401">
    <property type="gene designation" value="Rida"/>
</dbReference>
<dbReference type="VEuPathDB" id="HostDB:ENSMUSG00000022323"/>
<dbReference type="eggNOG" id="KOG2317">
    <property type="taxonomic scope" value="Eukaryota"/>
</dbReference>
<dbReference type="GeneTree" id="ENSGT00420000029792"/>
<dbReference type="HOGENOM" id="CLU_100715_7_1_1"/>
<dbReference type="InParanoid" id="P52760"/>
<dbReference type="OMA" id="GSYFKEP"/>
<dbReference type="OrthoDB" id="309640at2759"/>
<dbReference type="PhylomeDB" id="P52760"/>
<dbReference type="TreeFam" id="TF105775"/>
<dbReference type="Reactome" id="R-MMU-8849175">
    <property type="pathway name" value="Threonine catabolism"/>
</dbReference>
<dbReference type="BioGRID-ORCS" id="15473">
    <property type="hits" value="2 hits in 77 CRISPR screens"/>
</dbReference>
<dbReference type="ChiTaRS" id="Rida">
    <property type="organism name" value="mouse"/>
</dbReference>
<dbReference type="PRO" id="PR:P52760"/>
<dbReference type="Proteomes" id="UP000000589">
    <property type="component" value="Chromosome 15"/>
</dbReference>
<dbReference type="RNAct" id="P52760">
    <property type="molecule type" value="protein"/>
</dbReference>
<dbReference type="Bgee" id="ENSMUSG00000022323">
    <property type="expression patterns" value="Expressed in right kidney and 264 other cell types or tissues"/>
</dbReference>
<dbReference type="GO" id="GO:0005759">
    <property type="term" value="C:mitochondrial matrix"/>
    <property type="evidence" value="ECO:0000250"/>
    <property type="project" value="UniProtKB"/>
</dbReference>
<dbReference type="GO" id="GO:0005739">
    <property type="term" value="C:mitochondrion"/>
    <property type="evidence" value="ECO:0007005"/>
    <property type="project" value="MGI"/>
</dbReference>
<dbReference type="GO" id="GO:0005634">
    <property type="term" value="C:nucleus"/>
    <property type="evidence" value="ECO:0007669"/>
    <property type="project" value="UniProtKB-SubCell"/>
</dbReference>
<dbReference type="GO" id="GO:0005777">
    <property type="term" value="C:peroxisome"/>
    <property type="evidence" value="ECO:0000250"/>
    <property type="project" value="UniProtKB"/>
</dbReference>
<dbReference type="GO" id="GO:0120242">
    <property type="term" value="F:2-iminobutanoate deaminase activity"/>
    <property type="evidence" value="ECO:0007669"/>
    <property type="project" value="RHEA"/>
</dbReference>
<dbReference type="GO" id="GO:0120243">
    <property type="term" value="F:2-iminopropanoate deaminase activity"/>
    <property type="evidence" value="ECO:0007669"/>
    <property type="project" value="RHEA"/>
</dbReference>
<dbReference type="GO" id="GO:0003729">
    <property type="term" value="F:mRNA binding"/>
    <property type="evidence" value="ECO:0000250"/>
    <property type="project" value="UniProtKB"/>
</dbReference>
<dbReference type="GO" id="GO:0016892">
    <property type="term" value="F:RNA endonuclease activity, producing 3'-phosphomonoesters"/>
    <property type="evidence" value="ECO:0000250"/>
    <property type="project" value="UniProtKB"/>
</dbReference>
<dbReference type="GO" id="GO:0006629">
    <property type="term" value="P:lipid metabolic process"/>
    <property type="evidence" value="ECO:0007669"/>
    <property type="project" value="UniProtKB-KW"/>
</dbReference>
<dbReference type="GO" id="GO:0006402">
    <property type="term" value="P:mRNA catabolic process"/>
    <property type="evidence" value="ECO:0000250"/>
    <property type="project" value="UniProtKB"/>
</dbReference>
<dbReference type="GO" id="GO:0061157">
    <property type="term" value="P:mRNA destabilization"/>
    <property type="evidence" value="ECO:0000250"/>
    <property type="project" value="UniProtKB"/>
</dbReference>
<dbReference type="GO" id="GO:0017148">
    <property type="term" value="P:negative regulation of translation"/>
    <property type="evidence" value="ECO:0000250"/>
    <property type="project" value="UniProtKB"/>
</dbReference>
<dbReference type="CDD" id="cd00448">
    <property type="entry name" value="YjgF_YER057c_UK114_family"/>
    <property type="match status" value="1"/>
</dbReference>
<dbReference type="FunFam" id="3.30.1330.40:FF:000008">
    <property type="entry name" value="ribonuclease UK114 isoform X2"/>
    <property type="match status" value="1"/>
</dbReference>
<dbReference type="Gene3D" id="3.30.1330.40">
    <property type="entry name" value="RutC-like"/>
    <property type="match status" value="1"/>
</dbReference>
<dbReference type="InterPro" id="IPR006056">
    <property type="entry name" value="RidA"/>
</dbReference>
<dbReference type="InterPro" id="IPR019897">
    <property type="entry name" value="RidA_CS"/>
</dbReference>
<dbReference type="InterPro" id="IPR035959">
    <property type="entry name" value="RutC-like_sf"/>
</dbReference>
<dbReference type="InterPro" id="IPR006175">
    <property type="entry name" value="YjgF/YER057c/UK114"/>
</dbReference>
<dbReference type="NCBIfam" id="TIGR00004">
    <property type="entry name" value="Rid family detoxifying hydrolase"/>
    <property type="match status" value="1"/>
</dbReference>
<dbReference type="PANTHER" id="PTHR11803">
    <property type="entry name" value="2-IMINOBUTANOATE/2-IMINOPROPANOATE DEAMINASE RIDA"/>
    <property type="match status" value="1"/>
</dbReference>
<dbReference type="PANTHER" id="PTHR11803:SF53">
    <property type="entry name" value="2-IMINOBUTANOATE_2-IMINOPROPANOATE DEAMINASE"/>
    <property type="match status" value="1"/>
</dbReference>
<dbReference type="Pfam" id="PF01042">
    <property type="entry name" value="Ribonuc_L-PSP"/>
    <property type="match status" value="1"/>
</dbReference>
<dbReference type="SUPFAM" id="SSF55298">
    <property type="entry name" value="YjgF-like"/>
    <property type="match status" value="1"/>
</dbReference>
<dbReference type="PROSITE" id="PS01094">
    <property type="entry name" value="UPF0076"/>
    <property type="match status" value="1"/>
</dbReference>
<accession>P52760</accession>
<accession>Q569N4</accession>
<keyword id="KW-0007">Acetylation</keyword>
<keyword id="KW-0963">Cytoplasm</keyword>
<keyword id="KW-0378">Hydrolase</keyword>
<keyword id="KW-0443">Lipid metabolism</keyword>
<keyword id="KW-0496">Mitochondrion</keyword>
<keyword id="KW-0539">Nucleus</keyword>
<keyword id="KW-0576">Peroxisome</keyword>
<keyword id="KW-1185">Reference proteome</keyword>
<keyword id="KW-0694">RNA-binding</keyword>
<reference key="1">
    <citation type="journal article" date="1997" name="Hepatology">
        <title>Hrp12, a novel heat-responsive, tissue-specific, phosphorylated protein isolated from mouse liver.</title>
        <authorList>
            <person name="Samuel S.J."/>
            <person name="Tzung S.P."/>
            <person name="Cohen S.A."/>
        </authorList>
    </citation>
    <scope>NUCLEOTIDE SEQUENCE [MRNA]</scope>
    <scope>TISSUE SPECIFICITY</scope>
    <source>
        <strain>C57BL/6J</strain>
        <tissue>Liver</tissue>
    </source>
</reference>
<reference key="2">
    <citation type="journal article" date="2004" name="Genome Res.">
        <title>The status, quality, and expansion of the NIH full-length cDNA project: the Mammalian Gene Collection (MGC).</title>
        <authorList>
            <consortium name="The MGC Project Team"/>
        </authorList>
    </citation>
    <scope>NUCLEOTIDE SEQUENCE [LARGE SCALE MRNA]</scope>
    <source>
        <strain>C57BL/6J</strain>
        <tissue>Brain</tissue>
    </source>
</reference>
<reference key="3">
    <citation type="journal article" date="2010" name="Cell">
        <title>A tissue-specific atlas of mouse protein phosphorylation and expression.</title>
        <authorList>
            <person name="Huttlin E.L."/>
            <person name="Jedrychowski M.P."/>
            <person name="Elias J.E."/>
            <person name="Goswami T."/>
            <person name="Rad R."/>
            <person name="Beausoleil S.A."/>
            <person name="Villen J."/>
            <person name="Haas W."/>
            <person name="Sowa M.E."/>
            <person name="Gygi S.P."/>
        </authorList>
    </citation>
    <scope>IDENTIFICATION BY MASS SPECTROMETRY [LARGE SCALE ANALYSIS]</scope>
    <source>
        <tissue>Brain</tissue>
        <tissue>Brown adipose tissue</tissue>
        <tissue>Heart</tissue>
        <tissue>Kidney</tissue>
        <tissue>Liver</tissue>
        <tissue>Lung</tissue>
        <tissue>Pancreas</tissue>
        <tissue>Spleen</tissue>
        <tissue>Testis</tissue>
    </source>
</reference>
<reference key="4">
    <citation type="journal article" date="2013" name="Mol. Cell">
        <title>SIRT5-mediated lysine desuccinylation impacts diverse metabolic pathways.</title>
        <authorList>
            <person name="Park J."/>
            <person name="Chen Y."/>
            <person name="Tishkoff D.X."/>
            <person name="Peng C."/>
            <person name="Tan M."/>
            <person name="Dai L."/>
            <person name="Xie Z."/>
            <person name="Zhang Y."/>
            <person name="Zwaans B.M."/>
            <person name="Skinner M.E."/>
            <person name="Lombard D.B."/>
            <person name="Zhao Y."/>
        </authorList>
    </citation>
    <scope>SUCCINYLATION [LARGE SCALE ANALYSIS] AT LYS-13; LYS-60; LYS-67 AND LYS-134</scope>
    <scope>IDENTIFICATION BY MASS SPECTROMETRY [LARGE SCALE ANALYSIS]</scope>
    <source>
        <tissue>Liver</tissue>
    </source>
</reference>
<protein>
    <recommendedName>
        <fullName evidence="1">2-iminobutanoate/2-iminopropanoate deaminase</fullName>
        <ecNumber evidence="1">3.5.99.10</ecNumber>
    </recommendedName>
    <alternativeName>
        <fullName evidence="5">Heat-responsive protein 12</fullName>
    </alternativeName>
    <alternativeName>
        <fullName evidence="7">Reactive intermediate imine deaminase A homolog</fullName>
    </alternativeName>
    <alternativeName>
        <fullName evidence="2">Translation inhibitor L-PSP ribonuclease</fullName>
    </alternativeName>
</protein>
<evidence type="ECO:0000250" key="1">
    <source>
        <dbReference type="UniProtKB" id="P52758"/>
    </source>
</evidence>
<evidence type="ECO:0000250" key="2">
    <source>
        <dbReference type="UniProtKB" id="P52759"/>
    </source>
</evidence>
<evidence type="ECO:0000250" key="3">
    <source>
        <dbReference type="UniProtKB" id="P80601"/>
    </source>
</evidence>
<evidence type="ECO:0000269" key="4">
    <source>
    </source>
</evidence>
<evidence type="ECO:0000303" key="5">
    <source>
    </source>
</evidence>
<evidence type="ECO:0000305" key="6"/>
<evidence type="ECO:0000312" key="7">
    <source>
        <dbReference type="MGI" id="MGI:1095401"/>
    </source>
</evidence>
<evidence type="ECO:0007744" key="8">
    <source>
    </source>
</evidence>